<feature type="chain" id="PRO_0000386023" description="GTPase Obg">
    <location>
        <begin position="1"/>
        <end position="429"/>
    </location>
</feature>
<feature type="domain" description="Obg" evidence="3">
    <location>
        <begin position="1"/>
        <end position="158"/>
    </location>
</feature>
<feature type="domain" description="OBG-type G" evidence="1">
    <location>
        <begin position="159"/>
        <end position="329"/>
    </location>
</feature>
<feature type="domain" description="OCT" evidence="2">
    <location>
        <begin position="351"/>
        <end position="429"/>
    </location>
</feature>
<feature type="region of interest" description="Disordered" evidence="4">
    <location>
        <begin position="124"/>
        <end position="145"/>
    </location>
</feature>
<feature type="binding site" evidence="1">
    <location>
        <begin position="165"/>
        <end position="172"/>
    </location>
    <ligand>
        <name>GTP</name>
        <dbReference type="ChEBI" id="CHEBI:37565"/>
    </ligand>
</feature>
<feature type="binding site" evidence="1">
    <location>
        <position position="172"/>
    </location>
    <ligand>
        <name>Mg(2+)</name>
        <dbReference type="ChEBI" id="CHEBI:18420"/>
    </ligand>
</feature>
<feature type="binding site" evidence="1">
    <location>
        <begin position="190"/>
        <end position="194"/>
    </location>
    <ligand>
        <name>GTP</name>
        <dbReference type="ChEBI" id="CHEBI:37565"/>
    </ligand>
</feature>
<feature type="binding site" evidence="1">
    <location>
        <position position="192"/>
    </location>
    <ligand>
        <name>Mg(2+)</name>
        <dbReference type="ChEBI" id="CHEBI:18420"/>
    </ligand>
</feature>
<feature type="binding site" evidence="1">
    <location>
        <begin position="212"/>
        <end position="215"/>
    </location>
    <ligand>
        <name>GTP</name>
        <dbReference type="ChEBI" id="CHEBI:37565"/>
    </ligand>
</feature>
<feature type="binding site" evidence="1">
    <location>
        <begin position="282"/>
        <end position="285"/>
    </location>
    <ligand>
        <name>GTP</name>
        <dbReference type="ChEBI" id="CHEBI:37565"/>
    </ligand>
</feature>
<feature type="binding site" evidence="1">
    <location>
        <begin position="310"/>
        <end position="312"/>
    </location>
    <ligand>
        <name>GTP</name>
        <dbReference type="ChEBI" id="CHEBI:37565"/>
    </ligand>
</feature>
<protein>
    <recommendedName>
        <fullName evidence="1">GTPase Obg</fullName>
        <ecNumber evidence="1">3.6.5.-</ecNumber>
    </recommendedName>
    <alternativeName>
        <fullName evidence="1">GTP-binding protein Obg</fullName>
    </alternativeName>
</protein>
<gene>
    <name evidence="1" type="primary">obg</name>
    <name type="ordered locus">lmo1537</name>
</gene>
<dbReference type="EC" id="3.6.5.-" evidence="1"/>
<dbReference type="EMBL" id="AL591979">
    <property type="protein sequence ID" value="CAC99615.1"/>
    <property type="molecule type" value="Genomic_DNA"/>
</dbReference>
<dbReference type="PIR" id="AI1266">
    <property type="entry name" value="AI1266"/>
</dbReference>
<dbReference type="RefSeq" id="NP_465062.1">
    <property type="nucleotide sequence ID" value="NC_003210.1"/>
</dbReference>
<dbReference type="SMR" id="Q8Y6Z3"/>
<dbReference type="STRING" id="169963.gene:17594194"/>
<dbReference type="PaxDb" id="169963-lmo1537"/>
<dbReference type="EnsemblBacteria" id="CAC99615">
    <property type="protein sequence ID" value="CAC99615"/>
    <property type="gene ID" value="CAC99615"/>
</dbReference>
<dbReference type="GeneID" id="987811"/>
<dbReference type="KEGG" id="lmo:lmo1537"/>
<dbReference type="PATRIC" id="fig|169963.11.peg.1578"/>
<dbReference type="eggNOG" id="COG0536">
    <property type="taxonomic scope" value="Bacteria"/>
</dbReference>
<dbReference type="HOGENOM" id="CLU_011747_2_1_9"/>
<dbReference type="OrthoDB" id="9807318at2"/>
<dbReference type="PhylomeDB" id="Q8Y6Z3"/>
<dbReference type="BioCyc" id="LMON169963:LMO1537-MONOMER"/>
<dbReference type="Proteomes" id="UP000000817">
    <property type="component" value="Chromosome"/>
</dbReference>
<dbReference type="GO" id="GO:0005737">
    <property type="term" value="C:cytoplasm"/>
    <property type="evidence" value="ECO:0007669"/>
    <property type="project" value="UniProtKB-SubCell"/>
</dbReference>
<dbReference type="GO" id="GO:0005525">
    <property type="term" value="F:GTP binding"/>
    <property type="evidence" value="ECO:0000318"/>
    <property type="project" value="GO_Central"/>
</dbReference>
<dbReference type="GO" id="GO:0003924">
    <property type="term" value="F:GTPase activity"/>
    <property type="evidence" value="ECO:0000318"/>
    <property type="project" value="GO_Central"/>
</dbReference>
<dbReference type="GO" id="GO:0000287">
    <property type="term" value="F:magnesium ion binding"/>
    <property type="evidence" value="ECO:0007669"/>
    <property type="project" value="InterPro"/>
</dbReference>
<dbReference type="GO" id="GO:0042254">
    <property type="term" value="P:ribosome biogenesis"/>
    <property type="evidence" value="ECO:0007669"/>
    <property type="project" value="UniProtKB-UniRule"/>
</dbReference>
<dbReference type="CDD" id="cd01898">
    <property type="entry name" value="Obg"/>
    <property type="match status" value="1"/>
</dbReference>
<dbReference type="FunFam" id="2.70.210.12:FF:000001">
    <property type="entry name" value="GTPase Obg"/>
    <property type="match status" value="1"/>
</dbReference>
<dbReference type="FunFam" id="3.40.50.300:FF:000515">
    <property type="entry name" value="GTPase Obg"/>
    <property type="match status" value="1"/>
</dbReference>
<dbReference type="Gene3D" id="3.30.300.350">
    <property type="entry name" value="GTP-binding protein OBG, C-terminal domain"/>
    <property type="match status" value="1"/>
</dbReference>
<dbReference type="Gene3D" id="2.70.210.12">
    <property type="entry name" value="GTP1/OBG domain"/>
    <property type="match status" value="1"/>
</dbReference>
<dbReference type="Gene3D" id="3.40.50.300">
    <property type="entry name" value="P-loop containing nucleotide triphosphate hydrolases"/>
    <property type="match status" value="1"/>
</dbReference>
<dbReference type="HAMAP" id="MF_01454">
    <property type="entry name" value="GTPase_Obg"/>
    <property type="match status" value="1"/>
</dbReference>
<dbReference type="InterPro" id="IPR031167">
    <property type="entry name" value="G_OBG"/>
</dbReference>
<dbReference type="InterPro" id="IPR006073">
    <property type="entry name" value="GTP-bd"/>
</dbReference>
<dbReference type="InterPro" id="IPR014100">
    <property type="entry name" value="GTP-bd_Obg/CgtA"/>
</dbReference>
<dbReference type="InterPro" id="IPR036346">
    <property type="entry name" value="GTP-bd_prot_GTP1/OBG_C_sf"/>
</dbReference>
<dbReference type="InterPro" id="IPR006074">
    <property type="entry name" value="GTP1-OBG_CS"/>
</dbReference>
<dbReference type="InterPro" id="IPR006169">
    <property type="entry name" value="GTP1_OBG_dom"/>
</dbReference>
<dbReference type="InterPro" id="IPR036726">
    <property type="entry name" value="GTP1_OBG_dom_sf"/>
</dbReference>
<dbReference type="InterPro" id="IPR045086">
    <property type="entry name" value="OBG_GTPase"/>
</dbReference>
<dbReference type="InterPro" id="IPR015349">
    <property type="entry name" value="OCT_dom"/>
</dbReference>
<dbReference type="InterPro" id="IPR027417">
    <property type="entry name" value="P-loop_NTPase"/>
</dbReference>
<dbReference type="InterPro" id="IPR005225">
    <property type="entry name" value="Small_GTP-bd"/>
</dbReference>
<dbReference type="NCBIfam" id="TIGR02729">
    <property type="entry name" value="Obg_CgtA"/>
    <property type="match status" value="1"/>
</dbReference>
<dbReference type="NCBIfam" id="TIGR03595">
    <property type="entry name" value="Obg_CgtA_exten"/>
    <property type="match status" value="1"/>
</dbReference>
<dbReference type="NCBIfam" id="NF008954">
    <property type="entry name" value="PRK12296.1"/>
    <property type="match status" value="1"/>
</dbReference>
<dbReference type="NCBIfam" id="NF008955">
    <property type="entry name" value="PRK12297.1"/>
    <property type="match status" value="1"/>
</dbReference>
<dbReference type="NCBIfam" id="NF008956">
    <property type="entry name" value="PRK12299.1"/>
    <property type="match status" value="1"/>
</dbReference>
<dbReference type="NCBIfam" id="TIGR00231">
    <property type="entry name" value="small_GTP"/>
    <property type="match status" value="1"/>
</dbReference>
<dbReference type="PANTHER" id="PTHR11702">
    <property type="entry name" value="DEVELOPMENTALLY REGULATED GTP-BINDING PROTEIN-RELATED"/>
    <property type="match status" value="1"/>
</dbReference>
<dbReference type="PANTHER" id="PTHR11702:SF31">
    <property type="entry name" value="MITOCHONDRIAL RIBOSOME-ASSOCIATED GTPASE 2"/>
    <property type="match status" value="1"/>
</dbReference>
<dbReference type="Pfam" id="PF09269">
    <property type="entry name" value="DUF1967"/>
    <property type="match status" value="1"/>
</dbReference>
<dbReference type="Pfam" id="PF01018">
    <property type="entry name" value="GTP1_OBG"/>
    <property type="match status" value="1"/>
</dbReference>
<dbReference type="Pfam" id="PF01926">
    <property type="entry name" value="MMR_HSR1"/>
    <property type="match status" value="1"/>
</dbReference>
<dbReference type="PIRSF" id="PIRSF002401">
    <property type="entry name" value="GTP_bd_Obg/CgtA"/>
    <property type="match status" value="1"/>
</dbReference>
<dbReference type="PRINTS" id="PR00326">
    <property type="entry name" value="GTP1OBG"/>
</dbReference>
<dbReference type="SUPFAM" id="SSF102741">
    <property type="entry name" value="Obg GTP-binding protein C-terminal domain"/>
    <property type="match status" value="1"/>
</dbReference>
<dbReference type="SUPFAM" id="SSF82051">
    <property type="entry name" value="Obg GTP-binding protein N-terminal domain"/>
    <property type="match status" value="1"/>
</dbReference>
<dbReference type="SUPFAM" id="SSF52540">
    <property type="entry name" value="P-loop containing nucleoside triphosphate hydrolases"/>
    <property type="match status" value="1"/>
</dbReference>
<dbReference type="PROSITE" id="PS51710">
    <property type="entry name" value="G_OBG"/>
    <property type="match status" value="1"/>
</dbReference>
<dbReference type="PROSITE" id="PS00905">
    <property type="entry name" value="GTP1_OBG"/>
    <property type="match status" value="1"/>
</dbReference>
<dbReference type="PROSITE" id="PS51883">
    <property type="entry name" value="OBG"/>
    <property type="match status" value="1"/>
</dbReference>
<dbReference type="PROSITE" id="PS51881">
    <property type="entry name" value="OCT"/>
    <property type="match status" value="1"/>
</dbReference>
<comment type="function">
    <text evidence="1">An essential GTPase which binds GTP, GDP and possibly (p)ppGpp with moderate affinity, with high nucleotide exchange rates and a fairly low GTP hydrolysis rate. Plays a role in control of the cell cycle, stress response, ribosome biogenesis and in those bacteria that undergo differentiation, in morphogenesis control.</text>
</comment>
<comment type="cofactor">
    <cofactor evidence="1">
        <name>Mg(2+)</name>
        <dbReference type="ChEBI" id="CHEBI:18420"/>
    </cofactor>
</comment>
<comment type="subunit">
    <text evidence="1">Monomer.</text>
</comment>
<comment type="subcellular location">
    <subcellularLocation>
        <location evidence="1">Cytoplasm</location>
    </subcellularLocation>
</comment>
<comment type="similarity">
    <text evidence="1">Belongs to the TRAFAC class OBG-HflX-like GTPase superfamily. OBG GTPase family.</text>
</comment>
<proteinExistence type="inferred from homology"/>
<accession>Q8Y6Z3</accession>
<evidence type="ECO:0000255" key="1">
    <source>
        <dbReference type="HAMAP-Rule" id="MF_01454"/>
    </source>
</evidence>
<evidence type="ECO:0000255" key="2">
    <source>
        <dbReference type="PROSITE-ProRule" id="PRU01229"/>
    </source>
</evidence>
<evidence type="ECO:0000255" key="3">
    <source>
        <dbReference type="PROSITE-ProRule" id="PRU01231"/>
    </source>
</evidence>
<evidence type="ECO:0000256" key="4">
    <source>
        <dbReference type="SAM" id="MobiDB-lite"/>
    </source>
</evidence>
<name>OBG_LISMO</name>
<keyword id="KW-0963">Cytoplasm</keyword>
<keyword id="KW-0342">GTP-binding</keyword>
<keyword id="KW-0378">Hydrolase</keyword>
<keyword id="KW-0460">Magnesium</keyword>
<keyword id="KW-0479">Metal-binding</keyword>
<keyword id="KW-0547">Nucleotide-binding</keyword>
<keyword id="KW-1185">Reference proteome</keyword>
<sequence>MFVDQVKIYVKAGNGGDGMVAFRREKFVPNGGPAGGDGGKGADVVFVVDEGLRTLVDFRFKRIFKAEHGEHGMSKSMHGRGAEDLVVKVPQGTIVKDIDTGEIIADLVAHGQRAVIAKAGRGGRGNKRFATPANPAPELSENGEPGQERNVQLELKVLADVGLVGFPSVGKSTLLSVVSAARPKIAAYHFTTIVPNLGMVDAGDGRSFVMADLPGLIEGASQGVGLGHQFLRHIERTRVIVHVIDMSGSEGRVPYEDYMAINNELEQYNLRLMERPQIIVANKMDMPDAEENLNEFKTKIAEDIPVFPISAVTKTGLRELLLAIADKLETTPEFPLNEILEQEDEDTVLYKYVAEEPDFEISREPDGTFVLSGAKIERLFTMTNFERDASISRFARQLRAMGVDEALRKRGAKDGDIVRLLDYEFEFMD</sequence>
<reference key="1">
    <citation type="journal article" date="2001" name="Science">
        <title>Comparative genomics of Listeria species.</title>
        <authorList>
            <person name="Glaser P."/>
            <person name="Frangeul L."/>
            <person name="Buchrieser C."/>
            <person name="Rusniok C."/>
            <person name="Amend A."/>
            <person name="Baquero F."/>
            <person name="Berche P."/>
            <person name="Bloecker H."/>
            <person name="Brandt P."/>
            <person name="Chakraborty T."/>
            <person name="Charbit A."/>
            <person name="Chetouani F."/>
            <person name="Couve E."/>
            <person name="de Daruvar A."/>
            <person name="Dehoux P."/>
            <person name="Domann E."/>
            <person name="Dominguez-Bernal G."/>
            <person name="Duchaud E."/>
            <person name="Durant L."/>
            <person name="Dussurget O."/>
            <person name="Entian K.-D."/>
            <person name="Fsihi H."/>
            <person name="Garcia-del Portillo F."/>
            <person name="Garrido P."/>
            <person name="Gautier L."/>
            <person name="Goebel W."/>
            <person name="Gomez-Lopez N."/>
            <person name="Hain T."/>
            <person name="Hauf J."/>
            <person name="Jackson D."/>
            <person name="Jones L.-M."/>
            <person name="Kaerst U."/>
            <person name="Kreft J."/>
            <person name="Kuhn M."/>
            <person name="Kunst F."/>
            <person name="Kurapkat G."/>
            <person name="Madueno E."/>
            <person name="Maitournam A."/>
            <person name="Mata Vicente J."/>
            <person name="Ng E."/>
            <person name="Nedjari H."/>
            <person name="Nordsiek G."/>
            <person name="Novella S."/>
            <person name="de Pablos B."/>
            <person name="Perez-Diaz J.-C."/>
            <person name="Purcell R."/>
            <person name="Remmel B."/>
            <person name="Rose M."/>
            <person name="Schlueter T."/>
            <person name="Simoes N."/>
            <person name="Tierrez A."/>
            <person name="Vazquez-Boland J.-A."/>
            <person name="Voss H."/>
            <person name="Wehland J."/>
            <person name="Cossart P."/>
        </authorList>
    </citation>
    <scope>NUCLEOTIDE SEQUENCE [LARGE SCALE GENOMIC DNA]</scope>
    <source>
        <strain>ATCC BAA-679 / EGD-e</strain>
    </source>
</reference>
<organism>
    <name type="scientific">Listeria monocytogenes serovar 1/2a (strain ATCC BAA-679 / EGD-e)</name>
    <dbReference type="NCBI Taxonomy" id="169963"/>
    <lineage>
        <taxon>Bacteria</taxon>
        <taxon>Bacillati</taxon>
        <taxon>Bacillota</taxon>
        <taxon>Bacilli</taxon>
        <taxon>Bacillales</taxon>
        <taxon>Listeriaceae</taxon>
        <taxon>Listeria</taxon>
    </lineage>
</organism>